<name>SYC_YERPN</name>
<keyword id="KW-0030">Aminoacyl-tRNA synthetase</keyword>
<keyword id="KW-0067">ATP-binding</keyword>
<keyword id="KW-0963">Cytoplasm</keyword>
<keyword id="KW-0436">Ligase</keyword>
<keyword id="KW-0479">Metal-binding</keyword>
<keyword id="KW-0547">Nucleotide-binding</keyword>
<keyword id="KW-0648">Protein biosynthesis</keyword>
<keyword id="KW-0862">Zinc</keyword>
<proteinExistence type="inferred from homology"/>
<comment type="catalytic activity">
    <reaction evidence="1">
        <text>tRNA(Cys) + L-cysteine + ATP = L-cysteinyl-tRNA(Cys) + AMP + diphosphate</text>
        <dbReference type="Rhea" id="RHEA:17773"/>
        <dbReference type="Rhea" id="RHEA-COMP:9661"/>
        <dbReference type="Rhea" id="RHEA-COMP:9679"/>
        <dbReference type="ChEBI" id="CHEBI:30616"/>
        <dbReference type="ChEBI" id="CHEBI:33019"/>
        <dbReference type="ChEBI" id="CHEBI:35235"/>
        <dbReference type="ChEBI" id="CHEBI:78442"/>
        <dbReference type="ChEBI" id="CHEBI:78517"/>
        <dbReference type="ChEBI" id="CHEBI:456215"/>
        <dbReference type="EC" id="6.1.1.16"/>
    </reaction>
</comment>
<comment type="cofactor">
    <cofactor evidence="1">
        <name>Zn(2+)</name>
        <dbReference type="ChEBI" id="CHEBI:29105"/>
    </cofactor>
    <text evidence="1">Binds 1 zinc ion per subunit.</text>
</comment>
<comment type="subunit">
    <text evidence="1">Monomer.</text>
</comment>
<comment type="subcellular location">
    <subcellularLocation>
        <location evidence="1">Cytoplasm</location>
    </subcellularLocation>
</comment>
<comment type="similarity">
    <text evidence="1">Belongs to the class-I aminoacyl-tRNA synthetase family.</text>
</comment>
<protein>
    <recommendedName>
        <fullName evidence="1">Cysteine--tRNA ligase</fullName>
        <ecNumber evidence="1">6.1.1.16</ecNumber>
    </recommendedName>
    <alternativeName>
        <fullName evidence="1">Cysteinyl-tRNA synthetase</fullName>
        <shortName evidence="1">CysRS</shortName>
    </alternativeName>
</protein>
<gene>
    <name evidence="1" type="primary">cysS</name>
    <name type="ordered locus">YPN_1017</name>
    <name type="ORF">YP516_1100</name>
</gene>
<feature type="chain" id="PRO_0000332916" description="Cysteine--tRNA ligase">
    <location>
        <begin position="1"/>
        <end position="461"/>
    </location>
</feature>
<feature type="short sequence motif" description="'HIGH' region">
    <location>
        <begin position="30"/>
        <end position="40"/>
    </location>
</feature>
<feature type="short sequence motif" description="'KMSKS' region">
    <location>
        <begin position="266"/>
        <end position="270"/>
    </location>
</feature>
<feature type="binding site" evidence="1">
    <location>
        <position position="28"/>
    </location>
    <ligand>
        <name>Zn(2+)</name>
        <dbReference type="ChEBI" id="CHEBI:29105"/>
    </ligand>
</feature>
<feature type="binding site" evidence="1">
    <location>
        <position position="209"/>
    </location>
    <ligand>
        <name>Zn(2+)</name>
        <dbReference type="ChEBI" id="CHEBI:29105"/>
    </ligand>
</feature>
<feature type="binding site" evidence="1">
    <location>
        <position position="234"/>
    </location>
    <ligand>
        <name>Zn(2+)</name>
        <dbReference type="ChEBI" id="CHEBI:29105"/>
    </ligand>
</feature>
<feature type="binding site" evidence="1">
    <location>
        <position position="238"/>
    </location>
    <ligand>
        <name>Zn(2+)</name>
        <dbReference type="ChEBI" id="CHEBI:29105"/>
    </ligand>
</feature>
<feature type="binding site" evidence="1">
    <location>
        <position position="269"/>
    </location>
    <ligand>
        <name>ATP</name>
        <dbReference type="ChEBI" id="CHEBI:30616"/>
    </ligand>
</feature>
<evidence type="ECO:0000255" key="1">
    <source>
        <dbReference type="HAMAP-Rule" id="MF_00041"/>
    </source>
</evidence>
<dbReference type="EC" id="6.1.1.16" evidence="1"/>
<dbReference type="EMBL" id="CP000305">
    <property type="protein sequence ID" value="ABG17349.1"/>
    <property type="molecule type" value="Genomic_DNA"/>
</dbReference>
<dbReference type="EMBL" id="ACNQ01000008">
    <property type="protein sequence ID" value="EEO77433.1"/>
    <property type="molecule type" value="Genomic_DNA"/>
</dbReference>
<dbReference type="RefSeq" id="WP_002222677.1">
    <property type="nucleotide sequence ID" value="NZ_ACNQ01000008.1"/>
</dbReference>
<dbReference type="SMR" id="Q1CKY1"/>
<dbReference type="GeneID" id="57975631"/>
<dbReference type="KEGG" id="ypn:YPN_1017"/>
<dbReference type="HOGENOM" id="CLU_013528_0_1_6"/>
<dbReference type="Proteomes" id="UP000008936">
    <property type="component" value="Chromosome"/>
</dbReference>
<dbReference type="GO" id="GO:0005829">
    <property type="term" value="C:cytosol"/>
    <property type="evidence" value="ECO:0007669"/>
    <property type="project" value="TreeGrafter"/>
</dbReference>
<dbReference type="GO" id="GO:0005524">
    <property type="term" value="F:ATP binding"/>
    <property type="evidence" value="ECO:0007669"/>
    <property type="project" value="UniProtKB-UniRule"/>
</dbReference>
<dbReference type="GO" id="GO:0004817">
    <property type="term" value="F:cysteine-tRNA ligase activity"/>
    <property type="evidence" value="ECO:0007669"/>
    <property type="project" value="UniProtKB-UniRule"/>
</dbReference>
<dbReference type="GO" id="GO:0008270">
    <property type="term" value="F:zinc ion binding"/>
    <property type="evidence" value="ECO:0007669"/>
    <property type="project" value="UniProtKB-UniRule"/>
</dbReference>
<dbReference type="GO" id="GO:0006423">
    <property type="term" value="P:cysteinyl-tRNA aminoacylation"/>
    <property type="evidence" value="ECO:0007669"/>
    <property type="project" value="UniProtKB-UniRule"/>
</dbReference>
<dbReference type="CDD" id="cd07963">
    <property type="entry name" value="Anticodon_Ia_Cys"/>
    <property type="match status" value="1"/>
</dbReference>
<dbReference type="CDD" id="cd00672">
    <property type="entry name" value="CysRS_core"/>
    <property type="match status" value="1"/>
</dbReference>
<dbReference type="FunFam" id="1.20.120.1910:FF:000001">
    <property type="entry name" value="Cysteine--tRNA ligase"/>
    <property type="match status" value="1"/>
</dbReference>
<dbReference type="FunFam" id="3.40.50.620:FF:000009">
    <property type="entry name" value="Cysteine--tRNA ligase"/>
    <property type="match status" value="1"/>
</dbReference>
<dbReference type="Gene3D" id="1.20.120.1910">
    <property type="entry name" value="Cysteine-tRNA ligase, C-terminal anti-codon recognition domain"/>
    <property type="match status" value="1"/>
</dbReference>
<dbReference type="Gene3D" id="3.40.50.620">
    <property type="entry name" value="HUPs"/>
    <property type="match status" value="1"/>
</dbReference>
<dbReference type="HAMAP" id="MF_00041">
    <property type="entry name" value="Cys_tRNA_synth"/>
    <property type="match status" value="1"/>
</dbReference>
<dbReference type="InterPro" id="IPR015803">
    <property type="entry name" value="Cys-tRNA-ligase"/>
</dbReference>
<dbReference type="InterPro" id="IPR015273">
    <property type="entry name" value="Cys-tRNA-synt_Ia_DALR"/>
</dbReference>
<dbReference type="InterPro" id="IPR024909">
    <property type="entry name" value="Cys-tRNA/MSH_ligase"/>
</dbReference>
<dbReference type="InterPro" id="IPR056411">
    <property type="entry name" value="CysS_C"/>
</dbReference>
<dbReference type="InterPro" id="IPR014729">
    <property type="entry name" value="Rossmann-like_a/b/a_fold"/>
</dbReference>
<dbReference type="InterPro" id="IPR032678">
    <property type="entry name" value="tRNA-synt_1_cat_dom"/>
</dbReference>
<dbReference type="InterPro" id="IPR009080">
    <property type="entry name" value="tRNAsynth_Ia_anticodon-bd"/>
</dbReference>
<dbReference type="NCBIfam" id="TIGR00435">
    <property type="entry name" value="cysS"/>
    <property type="match status" value="1"/>
</dbReference>
<dbReference type="PANTHER" id="PTHR10890:SF3">
    <property type="entry name" value="CYSTEINE--TRNA LIGASE, CYTOPLASMIC"/>
    <property type="match status" value="1"/>
</dbReference>
<dbReference type="PANTHER" id="PTHR10890">
    <property type="entry name" value="CYSTEINYL-TRNA SYNTHETASE"/>
    <property type="match status" value="1"/>
</dbReference>
<dbReference type="Pfam" id="PF23493">
    <property type="entry name" value="CysS_C"/>
    <property type="match status" value="1"/>
</dbReference>
<dbReference type="Pfam" id="PF09190">
    <property type="entry name" value="DALR_2"/>
    <property type="match status" value="1"/>
</dbReference>
<dbReference type="Pfam" id="PF01406">
    <property type="entry name" value="tRNA-synt_1e"/>
    <property type="match status" value="1"/>
</dbReference>
<dbReference type="PRINTS" id="PR00983">
    <property type="entry name" value="TRNASYNTHCYS"/>
</dbReference>
<dbReference type="SMART" id="SM00840">
    <property type="entry name" value="DALR_2"/>
    <property type="match status" value="1"/>
</dbReference>
<dbReference type="SUPFAM" id="SSF47323">
    <property type="entry name" value="Anticodon-binding domain of a subclass of class I aminoacyl-tRNA synthetases"/>
    <property type="match status" value="1"/>
</dbReference>
<dbReference type="SUPFAM" id="SSF52374">
    <property type="entry name" value="Nucleotidylyl transferase"/>
    <property type="match status" value="1"/>
</dbReference>
<organism>
    <name type="scientific">Yersinia pestis bv. Antiqua (strain Nepal516)</name>
    <dbReference type="NCBI Taxonomy" id="377628"/>
    <lineage>
        <taxon>Bacteria</taxon>
        <taxon>Pseudomonadati</taxon>
        <taxon>Pseudomonadota</taxon>
        <taxon>Gammaproteobacteria</taxon>
        <taxon>Enterobacterales</taxon>
        <taxon>Yersiniaceae</taxon>
        <taxon>Yersinia</taxon>
    </lineage>
</organism>
<sequence length="461" mass="52162">MLKIFNTLSRQKEEFKPIHAGKVGMYVCGITIYDLCHIGHGRTFVAFDVVARYLRYLGYSLTYVRNVTDVDDKIIKRAIENNETCEQLTTRMLAEMHKDFDALNLERPDLEPRATHHIAEIIEMTERLIARGHAYVASNGDVMFAVDSDPDYGVLSRQDLDQLQAGARVEVADVKRNPMDFVLWKMSKPGEPRWESPWGPGRPGWHIECSAMNGKQLGAHFDIHGGGSDLMFPHHENEIAQSTCAHDGPYVNYWMHSGMVMIDKEKMSKSLNNFFTIRDVLAYYDAETVRYFLMSGHYRSQLNYSEENLKQARASLERLYTALRGTDANATPAGGAEFEARFRTAMDDDFNTPEAYSVLFDIAREVNRLKNEDMAAANGLAAELRKLAQVLGLLEQDPELFLQGGAQADDDEVAKIEALIKQRNDARSSKNWALADAARDQLNELGIVLEDGPQGTTWRRK</sequence>
<accession>Q1CKY1</accession>
<accession>C4GQU2</accession>
<reference key="1">
    <citation type="journal article" date="2006" name="J. Bacteriol.">
        <title>Complete genome sequence of Yersinia pestis strains Antiqua and Nepal516: evidence of gene reduction in an emerging pathogen.</title>
        <authorList>
            <person name="Chain P.S.G."/>
            <person name="Hu P."/>
            <person name="Malfatti S.A."/>
            <person name="Radnedge L."/>
            <person name="Larimer F."/>
            <person name="Vergez L.M."/>
            <person name="Worsham P."/>
            <person name="Chu M.C."/>
            <person name="Andersen G.L."/>
        </authorList>
    </citation>
    <scope>NUCLEOTIDE SEQUENCE [LARGE SCALE GENOMIC DNA]</scope>
    <source>
        <strain>Nepal516</strain>
    </source>
</reference>
<reference key="2">
    <citation type="submission" date="2009-04" db="EMBL/GenBank/DDBJ databases">
        <title>Yersinia pestis Nepal516A whole genome shotgun sequencing project.</title>
        <authorList>
            <person name="Plunkett G. III"/>
            <person name="Anderson B.D."/>
            <person name="Baumler D.J."/>
            <person name="Burland V."/>
            <person name="Cabot E.L."/>
            <person name="Glasner J.D."/>
            <person name="Mau B."/>
            <person name="Neeno-Eckwall E."/>
            <person name="Perna N.T."/>
            <person name="Munk A.C."/>
            <person name="Tapia R."/>
            <person name="Green L.D."/>
            <person name="Rogers Y.C."/>
            <person name="Detter J.C."/>
            <person name="Bruce D.C."/>
            <person name="Brettin T.S."/>
        </authorList>
    </citation>
    <scope>NUCLEOTIDE SEQUENCE [LARGE SCALE GENOMIC DNA]</scope>
    <source>
        <strain>Nepal516</strain>
    </source>
</reference>